<feature type="chain" id="PRO_0000375055" description="Ribosomal protein uS12 methylthiotransferase RimO">
    <location>
        <begin position="1"/>
        <end position="434"/>
    </location>
</feature>
<feature type="domain" description="MTTase N-terminal" evidence="1">
    <location>
        <begin position="2"/>
        <end position="112"/>
    </location>
</feature>
<feature type="domain" description="Radical SAM core" evidence="2">
    <location>
        <begin position="128"/>
        <end position="365"/>
    </location>
</feature>
<feature type="domain" description="TRAM" evidence="1">
    <location>
        <begin position="368"/>
        <end position="434"/>
    </location>
</feature>
<feature type="binding site" evidence="1">
    <location>
        <position position="11"/>
    </location>
    <ligand>
        <name>[4Fe-4S] cluster</name>
        <dbReference type="ChEBI" id="CHEBI:49883"/>
        <label>1</label>
    </ligand>
</feature>
<feature type="binding site" evidence="1">
    <location>
        <position position="47"/>
    </location>
    <ligand>
        <name>[4Fe-4S] cluster</name>
        <dbReference type="ChEBI" id="CHEBI:49883"/>
        <label>1</label>
    </ligand>
</feature>
<feature type="binding site" evidence="1">
    <location>
        <position position="76"/>
    </location>
    <ligand>
        <name>[4Fe-4S] cluster</name>
        <dbReference type="ChEBI" id="CHEBI:49883"/>
        <label>1</label>
    </ligand>
</feature>
<feature type="binding site" evidence="1">
    <location>
        <position position="142"/>
    </location>
    <ligand>
        <name>[4Fe-4S] cluster</name>
        <dbReference type="ChEBI" id="CHEBI:49883"/>
        <label>2</label>
        <note>4Fe-4S-S-AdoMet</note>
    </ligand>
</feature>
<feature type="binding site" evidence="1">
    <location>
        <position position="146"/>
    </location>
    <ligand>
        <name>[4Fe-4S] cluster</name>
        <dbReference type="ChEBI" id="CHEBI:49883"/>
        <label>2</label>
        <note>4Fe-4S-S-AdoMet</note>
    </ligand>
</feature>
<feature type="binding site" evidence="1">
    <location>
        <position position="149"/>
    </location>
    <ligand>
        <name>[4Fe-4S] cluster</name>
        <dbReference type="ChEBI" id="CHEBI:49883"/>
        <label>2</label>
        <note>4Fe-4S-S-AdoMet</note>
    </ligand>
</feature>
<proteinExistence type="inferred from homology"/>
<gene>
    <name evidence="1" type="primary">rimO</name>
    <name type="ordered locus">TT_C0811</name>
</gene>
<reference key="1">
    <citation type="journal article" date="2004" name="Nat. Biotechnol.">
        <title>The genome sequence of the extreme thermophile Thermus thermophilus.</title>
        <authorList>
            <person name="Henne A."/>
            <person name="Brueggemann H."/>
            <person name="Raasch C."/>
            <person name="Wiezer A."/>
            <person name="Hartsch T."/>
            <person name="Liesegang H."/>
            <person name="Johann A."/>
            <person name="Lienard T."/>
            <person name="Gohl O."/>
            <person name="Martinez-Arias R."/>
            <person name="Jacobi C."/>
            <person name="Starkuviene V."/>
            <person name="Schlenczeck S."/>
            <person name="Dencker S."/>
            <person name="Huber R."/>
            <person name="Klenk H.-P."/>
            <person name="Kramer W."/>
            <person name="Merkl R."/>
            <person name="Gottschalk G."/>
            <person name="Fritz H.-J."/>
        </authorList>
    </citation>
    <scope>NUCLEOTIDE SEQUENCE [LARGE SCALE GENOMIC DNA]</scope>
    <source>
        <strain>ATCC BAA-163 / DSM 7039 / HB27</strain>
    </source>
</reference>
<organism>
    <name type="scientific">Thermus thermophilus (strain ATCC BAA-163 / DSM 7039 / HB27)</name>
    <dbReference type="NCBI Taxonomy" id="262724"/>
    <lineage>
        <taxon>Bacteria</taxon>
        <taxon>Thermotogati</taxon>
        <taxon>Deinococcota</taxon>
        <taxon>Deinococci</taxon>
        <taxon>Thermales</taxon>
        <taxon>Thermaceae</taxon>
        <taxon>Thermus</taxon>
    </lineage>
</organism>
<dbReference type="EC" id="2.8.4.4" evidence="1"/>
<dbReference type="EMBL" id="AE017221">
    <property type="protein sequence ID" value="AAS81157.1"/>
    <property type="molecule type" value="Genomic_DNA"/>
</dbReference>
<dbReference type="RefSeq" id="WP_011173243.1">
    <property type="nucleotide sequence ID" value="NC_005835.1"/>
</dbReference>
<dbReference type="SMR" id="Q72JG1"/>
<dbReference type="DNASU" id="2774747"/>
<dbReference type="KEGG" id="tth:TT_C0811"/>
<dbReference type="eggNOG" id="COG0621">
    <property type="taxonomic scope" value="Bacteria"/>
</dbReference>
<dbReference type="HOGENOM" id="CLU_018697_0_0_0"/>
<dbReference type="OrthoDB" id="9805215at2"/>
<dbReference type="Proteomes" id="UP000000592">
    <property type="component" value="Chromosome"/>
</dbReference>
<dbReference type="GO" id="GO:0005829">
    <property type="term" value="C:cytosol"/>
    <property type="evidence" value="ECO:0007669"/>
    <property type="project" value="TreeGrafter"/>
</dbReference>
<dbReference type="GO" id="GO:0051539">
    <property type="term" value="F:4 iron, 4 sulfur cluster binding"/>
    <property type="evidence" value="ECO:0007669"/>
    <property type="project" value="UniProtKB-UniRule"/>
</dbReference>
<dbReference type="GO" id="GO:0035599">
    <property type="term" value="F:aspartic acid methylthiotransferase activity"/>
    <property type="evidence" value="ECO:0007669"/>
    <property type="project" value="TreeGrafter"/>
</dbReference>
<dbReference type="GO" id="GO:0046872">
    <property type="term" value="F:metal ion binding"/>
    <property type="evidence" value="ECO:0007669"/>
    <property type="project" value="UniProtKB-KW"/>
</dbReference>
<dbReference type="GO" id="GO:0103039">
    <property type="term" value="F:protein methylthiotransferase activity"/>
    <property type="evidence" value="ECO:0007669"/>
    <property type="project" value="UniProtKB-EC"/>
</dbReference>
<dbReference type="GO" id="GO:0006400">
    <property type="term" value="P:tRNA modification"/>
    <property type="evidence" value="ECO:0007669"/>
    <property type="project" value="InterPro"/>
</dbReference>
<dbReference type="CDD" id="cd01335">
    <property type="entry name" value="Radical_SAM"/>
    <property type="match status" value="1"/>
</dbReference>
<dbReference type="FunFam" id="3.40.50.12160:FF:000002">
    <property type="entry name" value="Ribosomal protein S12 methylthiotransferase RimO"/>
    <property type="match status" value="1"/>
</dbReference>
<dbReference type="FunFam" id="3.80.30.20:FF:000001">
    <property type="entry name" value="tRNA-2-methylthio-N(6)-dimethylallyladenosine synthase 2"/>
    <property type="match status" value="1"/>
</dbReference>
<dbReference type="Gene3D" id="3.40.50.12160">
    <property type="entry name" value="Methylthiotransferase, N-terminal domain"/>
    <property type="match status" value="1"/>
</dbReference>
<dbReference type="Gene3D" id="2.40.50.140">
    <property type="entry name" value="Nucleic acid-binding proteins"/>
    <property type="match status" value="1"/>
</dbReference>
<dbReference type="Gene3D" id="3.80.30.20">
    <property type="entry name" value="tm_1862 like domain"/>
    <property type="match status" value="1"/>
</dbReference>
<dbReference type="HAMAP" id="MF_01865">
    <property type="entry name" value="MTTase_RimO"/>
    <property type="match status" value="1"/>
</dbReference>
<dbReference type="InterPro" id="IPR006638">
    <property type="entry name" value="Elp3/MiaA/NifB-like_rSAM"/>
</dbReference>
<dbReference type="InterPro" id="IPR005839">
    <property type="entry name" value="Methylthiotransferase"/>
</dbReference>
<dbReference type="InterPro" id="IPR020612">
    <property type="entry name" value="Methylthiotransferase_CS"/>
</dbReference>
<dbReference type="InterPro" id="IPR013848">
    <property type="entry name" value="Methylthiotransferase_N"/>
</dbReference>
<dbReference type="InterPro" id="IPR038135">
    <property type="entry name" value="Methylthiotransferase_N_sf"/>
</dbReference>
<dbReference type="InterPro" id="IPR012340">
    <property type="entry name" value="NA-bd_OB-fold"/>
</dbReference>
<dbReference type="InterPro" id="IPR005840">
    <property type="entry name" value="Ribosomal_uS12_MeSTrfase_RimO"/>
</dbReference>
<dbReference type="InterPro" id="IPR007197">
    <property type="entry name" value="rSAM"/>
</dbReference>
<dbReference type="InterPro" id="IPR023404">
    <property type="entry name" value="rSAM_horseshoe"/>
</dbReference>
<dbReference type="InterPro" id="IPR002792">
    <property type="entry name" value="TRAM_dom"/>
</dbReference>
<dbReference type="NCBIfam" id="TIGR01125">
    <property type="entry name" value="30S ribosomal protein S12 methylthiotransferase RimO"/>
    <property type="match status" value="1"/>
</dbReference>
<dbReference type="NCBIfam" id="TIGR00089">
    <property type="entry name" value="MiaB/RimO family radical SAM methylthiotransferase"/>
    <property type="match status" value="1"/>
</dbReference>
<dbReference type="PANTHER" id="PTHR43837">
    <property type="entry name" value="RIBOSOMAL PROTEIN S12 METHYLTHIOTRANSFERASE RIMO"/>
    <property type="match status" value="1"/>
</dbReference>
<dbReference type="PANTHER" id="PTHR43837:SF1">
    <property type="entry name" value="RIBOSOMAL PROTEIN US12 METHYLTHIOTRANSFERASE RIMO"/>
    <property type="match status" value="1"/>
</dbReference>
<dbReference type="Pfam" id="PF04055">
    <property type="entry name" value="Radical_SAM"/>
    <property type="match status" value="1"/>
</dbReference>
<dbReference type="Pfam" id="PF18693">
    <property type="entry name" value="TRAM_2"/>
    <property type="match status" value="1"/>
</dbReference>
<dbReference type="Pfam" id="PF00919">
    <property type="entry name" value="UPF0004"/>
    <property type="match status" value="1"/>
</dbReference>
<dbReference type="SFLD" id="SFLDG01082">
    <property type="entry name" value="B12-binding_domain_containing"/>
    <property type="match status" value="1"/>
</dbReference>
<dbReference type="SFLD" id="SFLDG01061">
    <property type="entry name" value="methylthiotransferase"/>
    <property type="match status" value="1"/>
</dbReference>
<dbReference type="SFLD" id="SFLDF00274">
    <property type="entry name" value="ribosomal_protein_S12_methylth"/>
    <property type="match status" value="1"/>
</dbReference>
<dbReference type="SMART" id="SM00729">
    <property type="entry name" value="Elp3"/>
    <property type="match status" value="1"/>
</dbReference>
<dbReference type="SUPFAM" id="SSF102114">
    <property type="entry name" value="Radical SAM enzymes"/>
    <property type="match status" value="1"/>
</dbReference>
<dbReference type="PROSITE" id="PS51449">
    <property type="entry name" value="MTTASE_N"/>
    <property type="match status" value="1"/>
</dbReference>
<dbReference type="PROSITE" id="PS01278">
    <property type="entry name" value="MTTASE_RADICAL"/>
    <property type="match status" value="1"/>
</dbReference>
<dbReference type="PROSITE" id="PS51918">
    <property type="entry name" value="RADICAL_SAM"/>
    <property type="match status" value="1"/>
</dbReference>
<dbReference type="PROSITE" id="PS50926">
    <property type="entry name" value="TRAM"/>
    <property type="match status" value="1"/>
</dbReference>
<sequence length="434" mass="48315">MAKIGFVSLGCPKALVDSEQILSRLKALGYETSPSYEEAELVIVNTCGFINEAVEESLEAIGEALKENGKVVVTGCLGARPEKIRERHPQVLAVTGPGEVERVLEAVQEVLPAPRDPFLDLIPPQVKLTPRHYAYVKLSEGCDHRCSFCIIPKLRGRLRSRDAADVLAEAARLVATGTKELLLVAQDLSAYGVDLGHRESLWGDRPVRAELKDLLTHMAELGVWIRLHYVYPYPHVKDLLPLMAEGKVLPYLDVPLQHASPRILRLMRRPGGYESHLKTLKAWREVVPELALRSTFIVGFPGETEEDFQILLDFLEEAELDRVGVFAYSPVEGAEANRLPDPVPEEVKEERKARLLEVQARVSLRKNQRFVGKTLEVLVDELPEPGLAVGRTYRDAPGVDGVVYVETDGTVRVGERIPVRILRADTYDLHGVQA</sequence>
<name>RIMO_THET2</name>
<keyword id="KW-0004">4Fe-4S</keyword>
<keyword id="KW-0963">Cytoplasm</keyword>
<keyword id="KW-0408">Iron</keyword>
<keyword id="KW-0411">Iron-sulfur</keyword>
<keyword id="KW-0479">Metal-binding</keyword>
<keyword id="KW-0949">S-adenosyl-L-methionine</keyword>
<keyword id="KW-0808">Transferase</keyword>
<accession>Q72JG1</accession>
<protein>
    <recommendedName>
        <fullName evidence="1">Ribosomal protein uS12 methylthiotransferase RimO</fullName>
        <shortName evidence="1">uS12 MTTase</shortName>
        <shortName evidence="1">uS12 methylthiotransferase</shortName>
        <ecNumber evidence="1">2.8.4.4</ecNumber>
    </recommendedName>
    <alternativeName>
        <fullName evidence="1">Ribosomal protein uS12 (aspartate-C(3))-methylthiotransferase</fullName>
    </alternativeName>
    <alternativeName>
        <fullName evidence="1">Ribosome maturation factor RimO</fullName>
    </alternativeName>
</protein>
<evidence type="ECO:0000255" key="1">
    <source>
        <dbReference type="HAMAP-Rule" id="MF_01865"/>
    </source>
</evidence>
<evidence type="ECO:0000255" key="2">
    <source>
        <dbReference type="PROSITE-ProRule" id="PRU01266"/>
    </source>
</evidence>
<comment type="function">
    <text evidence="1">Catalyzes the methylthiolation of an aspartic acid residue of ribosomal protein uS12.</text>
</comment>
<comment type="catalytic activity">
    <reaction evidence="1">
        <text>L-aspartate(89)-[ribosomal protein uS12]-hydrogen + (sulfur carrier)-SH + AH2 + 2 S-adenosyl-L-methionine = 3-methylsulfanyl-L-aspartate(89)-[ribosomal protein uS12]-hydrogen + (sulfur carrier)-H + 5'-deoxyadenosine + L-methionine + A + S-adenosyl-L-homocysteine + 2 H(+)</text>
        <dbReference type="Rhea" id="RHEA:37087"/>
        <dbReference type="Rhea" id="RHEA-COMP:10460"/>
        <dbReference type="Rhea" id="RHEA-COMP:10461"/>
        <dbReference type="Rhea" id="RHEA-COMP:14737"/>
        <dbReference type="Rhea" id="RHEA-COMP:14739"/>
        <dbReference type="ChEBI" id="CHEBI:13193"/>
        <dbReference type="ChEBI" id="CHEBI:15378"/>
        <dbReference type="ChEBI" id="CHEBI:17319"/>
        <dbReference type="ChEBI" id="CHEBI:17499"/>
        <dbReference type="ChEBI" id="CHEBI:29917"/>
        <dbReference type="ChEBI" id="CHEBI:29961"/>
        <dbReference type="ChEBI" id="CHEBI:57844"/>
        <dbReference type="ChEBI" id="CHEBI:57856"/>
        <dbReference type="ChEBI" id="CHEBI:59789"/>
        <dbReference type="ChEBI" id="CHEBI:64428"/>
        <dbReference type="ChEBI" id="CHEBI:73599"/>
        <dbReference type="EC" id="2.8.4.4"/>
    </reaction>
</comment>
<comment type="cofactor">
    <cofactor evidence="1">
        <name>[4Fe-4S] cluster</name>
        <dbReference type="ChEBI" id="CHEBI:49883"/>
    </cofactor>
    <text evidence="1">Binds 2 [4Fe-4S] clusters. One cluster is coordinated with 3 cysteines and an exchangeable S-adenosyl-L-methionine.</text>
</comment>
<comment type="subcellular location">
    <subcellularLocation>
        <location evidence="1">Cytoplasm</location>
    </subcellularLocation>
</comment>
<comment type="similarity">
    <text evidence="1">Belongs to the methylthiotransferase family. RimO subfamily.</text>
</comment>